<reference key="1">
    <citation type="journal article" date="2001" name="J. Appl. Microbiol.">
        <title>Heat and salt stress in the food pathogen Bacillus cereus.</title>
        <authorList>
            <person name="Browne N."/>
            <person name="Dowds B.C.A."/>
        </authorList>
    </citation>
    <scope>PROTEIN SEQUENCE</scope>
    <scope>INDUCTION</scope>
    <source>
        <strain>DSM 626 / NCIMB 11796 / T</strain>
    </source>
</reference>
<proteinExistence type="evidence at protein level"/>
<feature type="chain" id="PRO_0000145901" description="Phosphoglycerate kinase">
    <location>
        <begin position="1"/>
        <end position="20" status="greater than"/>
    </location>
</feature>
<feature type="region of interest" description="Disordered" evidence="2">
    <location>
        <begin position="1"/>
        <end position="20"/>
    </location>
</feature>
<feature type="non-terminal residue">
    <location>
        <position position="20"/>
    </location>
</feature>
<dbReference type="EC" id="2.7.2.3"/>
<dbReference type="UniPathway" id="UPA00109">
    <property type="reaction ID" value="UER00185"/>
</dbReference>
<dbReference type="GO" id="GO:0005737">
    <property type="term" value="C:cytoplasm"/>
    <property type="evidence" value="ECO:0007669"/>
    <property type="project" value="UniProtKB-SubCell"/>
</dbReference>
<dbReference type="GO" id="GO:0005524">
    <property type="term" value="F:ATP binding"/>
    <property type="evidence" value="ECO:0007669"/>
    <property type="project" value="UniProtKB-KW"/>
</dbReference>
<dbReference type="GO" id="GO:0004618">
    <property type="term" value="F:phosphoglycerate kinase activity"/>
    <property type="evidence" value="ECO:0007669"/>
    <property type="project" value="UniProtKB-EC"/>
</dbReference>
<dbReference type="GO" id="GO:0006096">
    <property type="term" value="P:glycolytic process"/>
    <property type="evidence" value="ECO:0007669"/>
    <property type="project" value="UniProtKB-UniPathway"/>
</dbReference>
<name>PGK_BACCE</name>
<accession>P83075</accession>
<evidence type="ECO:0000250" key="1"/>
<evidence type="ECO:0000256" key="2">
    <source>
        <dbReference type="SAM" id="MobiDB-lite"/>
    </source>
</evidence>
<evidence type="ECO:0000269" key="3">
    <source>
    </source>
</evidence>
<evidence type="ECO:0000305" key="4"/>
<sequence length="20" mass="2403">MNKKSIRNVNLKGKRVFDRV</sequence>
<comment type="catalytic activity">
    <reaction>
        <text>(2R)-3-phosphoglycerate + ATP = (2R)-3-phospho-glyceroyl phosphate + ADP</text>
        <dbReference type="Rhea" id="RHEA:14801"/>
        <dbReference type="ChEBI" id="CHEBI:30616"/>
        <dbReference type="ChEBI" id="CHEBI:57604"/>
        <dbReference type="ChEBI" id="CHEBI:58272"/>
        <dbReference type="ChEBI" id="CHEBI:456216"/>
        <dbReference type="EC" id="2.7.2.3"/>
    </reaction>
</comment>
<comment type="pathway">
    <text>Carbohydrate degradation; glycolysis; pyruvate from D-glyceraldehyde 3-phosphate: step 2/5.</text>
</comment>
<comment type="subunit">
    <text evidence="1">Monomer.</text>
</comment>
<comment type="subcellular location">
    <subcellularLocation>
        <location>Cytoplasm</location>
    </subcellularLocation>
</comment>
<comment type="induction">
    <text evidence="3">By heat shock.</text>
</comment>
<comment type="similarity">
    <text evidence="4">Belongs to the phosphoglycerate kinase family.</text>
</comment>
<protein>
    <recommendedName>
        <fullName>Phosphoglycerate kinase</fullName>
        <ecNumber>2.7.2.3</ecNumber>
    </recommendedName>
</protein>
<keyword id="KW-0067">ATP-binding</keyword>
<keyword id="KW-0963">Cytoplasm</keyword>
<keyword id="KW-0903">Direct protein sequencing</keyword>
<keyword id="KW-0324">Glycolysis</keyword>
<keyword id="KW-0418">Kinase</keyword>
<keyword id="KW-0547">Nucleotide-binding</keyword>
<keyword id="KW-0346">Stress response</keyword>
<keyword id="KW-0808">Transferase</keyword>
<organism>
    <name type="scientific">Bacillus cereus</name>
    <dbReference type="NCBI Taxonomy" id="1396"/>
    <lineage>
        <taxon>Bacteria</taxon>
        <taxon>Bacillati</taxon>
        <taxon>Bacillota</taxon>
        <taxon>Bacilli</taxon>
        <taxon>Bacillales</taxon>
        <taxon>Bacillaceae</taxon>
        <taxon>Bacillus</taxon>
        <taxon>Bacillus cereus group</taxon>
    </lineage>
</organism>